<accession>P9WJR7</accession>
<accession>L0T7Y3</accession>
<accession>O53876</accession>
<accession>P0A5K6</accession>
<keyword id="KW-0002">3D-structure</keyword>
<keyword id="KW-0456">Lyase</keyword>
<keyword id="KW-0501">Molybdenum cofactor biosynthesis</keyword>
<keyword id="KW-1185">Reference proteome</keyword>
<organism>
    <name type="scientific">Mycobacterium tuberculosis (strain ATCC 25618 / H37Rv)</name>
    <dbReference type="NCBI Taxonomy" id="83332"/>
    <lineage>
        <taxon>Bacteria</taxon>
        <taxon>Bacillati</taxon>
        <taxon>Actinomycetota</taxon>
        <taxon>Actinomycetes</taxon>
        <taxon>Mycobacteriales</taxon>
        <taxon>Mycobacteriaceae</taxon>
        <taxon>Mycobacterium</taxon>
        <taxon>Mycobacterium tuberculosis complex</taxon>
    </lineage>
</organism>
<gene>
    <name type="primary">moaC2</name>
    <name type="ordered locus">Rv0864</name>
    <name type="ORF">MTV043.57</name>
</gene>
<feature type="chain" id="PRO_0000097812" description="Cyclic pyranopterin monophosphate synthase 2">
    <location>
        <begin position="1"/>
        <end position="167"/>
    </location>
</feature>
<feature type="region of interest" description="Disordered" evidence="2">
    <location>
        <begin position="1"/>
        <end position="23"/>
    </location>
</feature>
<feature type="compositionally biased region" description="Basic and acidic residues" evidence="2">
    <location>
        <begin position="11"/>
        <end position="23"/>
    </location>
</feature>
<feature type="active site" evidence="1">
    <location>
        <position position="137"/>
    </location>
</feature>
<feature type="binding site" evidence="1">
    <location>
        <begin position="86"/>
        <end position="88"/>
    </location>
    <ligand>
        <name>substrate</name>
    </ligand>
</feature>
<feature type="binding site" evidence="1">
    <location>
        <begin position="122"/>
        <end position="123"/>
    </location>
    <ligand>
        <name>substrate</name>
    </ligand>
</feature>
<feature type="strand" evidence="3">
    <location>
        <begin position="36"/>
        <end position="46"/>
    </location>
</feature>
<feature type="helix" evidence="3">
    <location>
        <begin position="49"/>
        <end position="57"/>
    </location>
</feature>
<feature type="helix" evidence="3">
    <location>
        <begin position="65"/>
        <end position="78"/>
    </location>
</feature>
<feature type="helix" evidence="3">
    <location>
        <begin position="80"/>
        <end position="83"/>
    </location>
</feature>
<feature type="strand" evidence="3">
    <location>
        <begin position="92"/>
        <end position="101"/>
    </location>
</feature>
<feature type="strand" evidence="3">
    <location>
        <begin position="103"/>
        <end position="118"/>
    </location>
</feature>
<feature type="helix" evidence="3">
    <location>
        <begin position="121"/>
        <end position="139"/>
    </location>
</feature>
<feature type="turn" evidence="3">
    <location>
        <begin position="140"/>
        <end position="142"/>
    </location>
</feature>
<feature type="strand" evidence="3">
    <location>
        <begin position="147"/>
        <end position="156"/>
    </location>
</feature>
<proteinExistence type="evidence at protein level"/>
<protein>
    <recommendedName>
        <fullName evidence="1">Cyclic pyranopterin monophosphate synthase 2</fullName>
        <ecNumber evidence="1">4.6.1.17</ecNumber>
    </recommendedName>
    <alternativeName>
        <fullName evidence="1">Molybdenum cofactor biosynthesis protein C 2</fullName>
    </alternativeName>
</protein>
<name>MOAC2_MYCTU</name>
<comment type="function">
    <text evidence="1">Catalyzes the conversion of (8S)-3',8-cyclo-7,8-dihydroguanosine 5'-triphosphate to cyclic pyranopterin monophosphate (cPMP).</text>
</comment>
<comment type="catalytic activity">
    <reaction evidence="1">
        <text>(8S)-3',8-cyclo-7,8-dihydroguanosine 5'-triphosphate = cyclic pyranopterin phosphate + diphosphate</text>
        <dbReference type="Rhea" id="RHEA:49580"/>
        <dbReference type="ChEBI" id="CHEBI:33019"/>
        <dbReference type="ChEBI" id="CHEBI:59648"/>
        <dbReference type="ChEBI" id="CHEBI:131766"/>
        <dbReference type="EC" id="4.6.1.17"/>
    </reaction>
</comment>
<comment type="pathway">
    <text evidence="1">Cofactor biosynthesis; molybdopterin biosynthesis.</text>
</comment>
<comment type="subunit">
    <text evidence="1">Homohexamer; trimer of dimers.</text>
</comment>
<comment type="similarity">
    <text evidence="1">Belongs to the MoaC family.</text>
</comment>
<evidence type="ECO:0000255" key="1">
    <source>
        <dbReference type="HAMAP-Rule" id="MF_01224"/>
    </source>
</evidence>
<evidence type="ECO:0000256" key="2">
    <source>
        <dbReference type="SAM" id="MobiDB-lite"/>
    </source>
</evidence>
<evidence type="ECO:0007829" key="3">
    <source>
        <dbReference type="PDB" id="4FDF"/>
    </source>
</evidence>
<sequence length="167" mass="17598">MARASGASDYRSGELSHQDERGAAHMVDITEKATTKRTAVAAGILRTSAQVVALISTGGLPKGDALATARVAGIMAAKRTSDLIPLCHQLALTGVDVDFTVGQLDIEITATVRSTDRTGVEMEALTAVSVAALTLYDMIKAVDPGALIDDIRVLHKEGGRRGTWTRR</sequence>
<dbReference type="EC" id="4.6.1.17" evidence="1"/>
<dbReference type="EMBL" id="AL123456">
    <property type="protein sequence ID" value="CCP43612.1"/>
    <property type="molecule type" value="Genomic_DNA"/>
</dbReference>
<dbReference type="PIR" id="H70815">
    <property type="entry name" value="H70815"/>
</dbReference>
<dbReference type="RefSeq" id="NP_215379.1">
    <property type="nucleotide sequence ID" value="NC_000962.3"/>
</dbReference>
<dbReference type="PDB" id="4FDF">
    <property type="method" value="X-ray"/>
    <property type="resolution" value="2.20 A"/>
    <property type="chains" value="A/B=1-167"/>
</dbReference>
<dbReference type="PDBsum" id="4FDF"/>
<dbReference type="SMR" id="P9WJR7"/>
<dbReference type="FunCoup" id="P9WJR7">
    <property type="interactions" value="136"/>
</dbReference>
<dbReference type="STRING" id="83332.Rv0864"/>
<dbReference type="PaxDb" id="83332-Rv0864"/>
<dbReference type="DNASU" id="885826"/>
<dbReference type="GeneID" id="885826"/>
<dbReference type="KEGG" id="mtu:Rv0864"/>
<dbReference type="KEGG" id="mtv:RVBD_0864"/>
<dbReference type="TubercuList" id="Rv0864"/>
<dbReference type="eggNOG" id="COG0315">
    <property type="taxonomic scope" value="Bacteria"/>
</dbReference>
<dbReference type="InParanoid" id="P9WJR7"/>
<dbReference type="OrthoDB" id="9794429at2"/>
<dbReference type="PhylomeDB" id="P9WJR7"/>
<dbReference type="BRENDA" id="4.6.1.17">
    <property type="organism ID" value="3445"/>
</dbReference>
<dbReference type="UniPathway" id="UPA00344"/>
<dbReference type="EvolutionaryTrace" id="P9WJR7"/>
<dbReference type="Proteomes" id="UP000001584">
    <property type="component" value="Chromosome"/>
</dbReference>
<dbReference type="GO" id="GO:0061799">
    <property type="term" value="F:cyclic pyranopterin monophosphate synthase activity"/>
    <property type="evidence" value="ECO:0007669"/>
    <property type="project" value="UniProtKB-UniRule"/>
</dbReference>
<dbReference type="GO" id="GO:0006777">
    <property type="term" value="P:Mo-molybdopterin cofactor biosynthetic process"/>
    <property type="evidence" value="ECO:0007669"/>
    <property type="project" value="UniProtKB-UniRule"/>
</dbReference>
<dbReference type="CDD" id="cd01420">
    <property type="entry name" value="MoaC_PE"/>
    <property type="match status" value="1"/>
</dbReference>
<dbReference type="Gene3D" id="3.30.70.640">
    <property type="entry name" value="Molybdopterin cofactor biosynthesis C (MoaC) domain"/>
    <property type="match status" value="1"/>
</dbReference>
<dbReference type="HAMAP" id="MF_01224_B">
    <property type="entry name" value="MoaC_B"/>
    <property type="match status" value="1"/>
</dbReference>
<dbReference type="InterPro" id="IPR023045">
    <property type="entry name" value="MoaC"/>
</dbReference>
<dbReference type="InterPro" id="IPR047594">
    <property type="entry name" value="MoaC_bact/euk"/>
</dbReference>
<dbReference type="InterPro" id="IPR036522">
    <property type="entry name" value="MoaC_sf"/>
</dbReference>
<dbReference type="InterPro" id="IPR050105">
    <property type="entry name" value="MoCo_biosynth_MoaA/MoaC"/>
</dbReference>
<dbReference type="InterPro" id="IPR002820">
    <property type="entry name" value="Mopterin_CF_biosynth-C_dom"/>
</dbReference>
<dbReference type="NCBIfam" id="TIGR00581">
    <property type="entry name" value="moaC"/>
    <property type="match status" value="1"/>
</dbReference>
<dbReference type="NCBIfam" id="NF006870">
    <property type="entry name" value="PRK09364.1"/>
    <property type="match status" value="1"/>
</dbReference>
<dbReference type="PANTHER" id="PTHR22960:SF29">
    <property type="entry name" value="CYCLIC PYRANOPTERIN MONOPHOSPHATE SYNTHASE"/>
    <property type="match status" value="1"/>
</dbReference>
<dbReference type="PANTHER" id="PTHR22960">
    <property type="entry name" value="MOLYBDOPTERIN COFACTOR SYNTHESIS PROTEIN A"/>
    <property type="match status" value="1"/>
</dbReference>
<dbReference type="Pfam" id="PF01967">
    <property type="entry name" value="MoaC"/>
    <property type="match status" value="1"/>
</dbReference>
<dbReference type="SUPFAM" id="SSF55040">
    <property type="entry name" value="Molybdenum cofactor biosynthesis protein C, MoaC"/>
    <property type="match status" value="1"/>
</dbReference>
<reference key="1">
    <citation type="journal article" date="1998" name="Nature">
        <title>Deciphering the biology of Mycobacterium tuberculosis from the complete genome sequence.</title>
        <authorList>
            <person name="Cole S.T."/>
            <person name="Brosch R."/>
            <person name="Parkhill J."/>
            <person name="Garnier T."/>
            <person name="Churcher C.M."/>
            <person name="Harris D.E."/>
            <person name="Gordon S.V."/>
            <person name="Eiglmeier K."/>
            <person name="Gas S."/>
            <person name="Barry C.E. III"/>
            <person name="Tekaia F."/>
            <person name="Badcock K."/>
            <person name="Basham D."/>
            <person name="Brown D."/>
            <person name="Chillingworth T."/>
            <person name="Connor R."/>
            <person name="Davies R.M."/>
            <person name="Devlin K."/>
            <person name="Feltwell T."/>
            <person name="Gentles S."/>
            <person name="Hamlin N."/>
            <person name="Holroyd S."/>
            <person name="Hornsby T."/>
            <person name="Jagels K."/>
            <person name="Krogh A."/>
            <person name="McLean J."/>
            <person name="Moule S."/>
            <person name="Murphy L.D."/>
            <person name="Oliver S."/>
            <person name="Osborne J."/>
            <person name="Quail M.A."/>
            <person name="Rajandream M.A."/>
            <person name="Rogers J."/>
            <person name="Rutter S."/>
            <person name="Seeger K."/>
            <person name="Skelton S."/>
            <person name="Squares S."/>
            <person name="Squares R."/>
            <person name="Sulston J.E."/>
            <person name="Taylor K."/>
            <person name="Whitehead S."/>
            <person name="Barrell B.G."/>
        </authorList>
    </citation>
    <scope>NUCLEOTIDE SEQUENCE [LARGE SCALE GENOMIC DNA]</scope>
    <source>
        <strain>ATCC 25618 / H37Rv</strain>
    </source>
</reference>
<reference key="2">
    <citation type="journal article" date="2011" name="Mol. Cell. Proteomics">
        <title>Proteogenomic analysis of Mycobacterium tuberculosis by high resolution mass spectrometry.</title>
        <authorList>
            <person name="Kelkar D.S."/>
            <person name="Kumar D."/>
            <person name="Kumar P."/>
            <person name="Balakrishnan L."/>
            <person name="Muthusamy B."/>
            <person name="Yadav A.K."/>
            <person name="Shrivastava P."/>
            <person name="Marimuthu A."/>
            <person name="Anand S."/>
            <person name="Sundaram H."/>
            <person name="Kingsbury R."/>
            <person name="Harsha H.C."/>
            <person name="Nair B."/>
            <person name="Prasad T.S."/>
            <person name="Chauhan D.S."/>
            <person name="Katoch K."/>
            <person name="Katoch V.M."/>
            <person name="Kumar P."/>
            <person name="Chaerkady R."/>
            <person name="Ramachandran S."/>
            <person name="Dash D."/>
            <person name="Pandey A."/>
        </authorList>
    </citation>
    <scope>IDENTIFICATION BY MASS SPECTROMETRY [LARGE SCALE ANALYSIS]</scope>
    <source>
        <strain>ATCC 25618 / H37Rv</strain>
    </source>
</reference>
<reference key="3">
    <citation type="journal article" date="2012" name="Acta Crystallogr. F">
        <title>Overexpression, purification, crystallization and preliminary X-ray analysis of putative molybdenum cofactor biosynthesis protein C (MoaC2) from Mycobacterium tuberculosis H37Rv.</title>
        <authorList>
            <person name="Srivastava S."/>
            <person name="Srivastava V.K."/>
            <person name="Arora A."/>
            <person name="Pratap J.V."/>
        </authorList>
    </citation>
    <scope>CRYSTALLIZATION</scope>
    <source>
        <strain>ATCC 25618 / H37Rv</strain>
    </source>
</reference>